<dbReference type="GO" id="GO:0005576">
    <property type="term" value="C:extracellular region"/>
    <property type="evidence" value="ECO:0007669"/>
    <property type="project" value="UniProtKB-KW"/>
</dbReference>
<comment type="subcellular location">
    <subcellularLocation>
        <location evidence="2">Secreted</location>
        <location evidence="2">Cell wall</location>
    </subcellularLocation>
</comment>
<feature type="chain" id="PRO_0000079631" description="54 kDa cell wall protein">
    <location>
        <begin position="1"/>
        <end position="20" status="greater than"/>
    </location>
</feature>
<feature type="region of interest" description="Disordered" evidence="1">
    <location>
        <begin position="1"/>
        <end position="20"/>
    </location>
</feature>
<feature type="non-terminal residue" evidence="3">
    <location>
        <position position="20"/>
    </location>
</feature>
<organism>
    <name type="scientific">Arabidopsis thaliana</name>
    <name type="common">Mouse-ear cress</name>
    <dbReference type="NCBI Taxonomy" id="3702"/>
    <lineage>
        <taxon>Eukaryota</taxon>
        <taxon>Viridiplantae</taxon>
        <taxon>Streptophyta</taxon>
        <taxon>Embryophyta</taxon>
        <taxon>Tracheophyta</taxon>
        <taxon>Spermatophyta</taxon>
        <taxon>Magnoliopsida</taxon>
        <taxon>eudicotyledons</taxon>
        <taxon>Gunneridae</taxon>
        <taxon>Pentapetalae</taxon>
        <taxon>rosids</taxon>
        <taxon>malvids</taxon>
        <taxon>Brassicales</taxon>
        <taxon>Brassicaceae</taxon>
        <taxon>Camelineae</taxon>
        <taxon>Arabidopsis</taxon>
    </lineage>
</organism>
<name>CWP04_ARATH</name>
<sequence>KVPVDDQFRRVNNGGATDTR</sequence>
<reference evidence="4" key="1">
    <citation type="journal article" date="1997" name="J. Biol. Chem.">
        <title>Differential extraction and protein sequencing reveals major differences in patterns of primary cell wall proteins from plants.</title>
        <authorList>
            <person name="Robertson D."/>
            <person name="Mitchell G.P."/>
            <person name="Gilroy J.S."/>
            <person name="Gerrish C."/>
            <person name="Bolwell G.P."/>
            <person name="Slabas A.R."/>
        </authorList>
    </citation>
    <scope>PROTEIN SEQUENCE</scope>
    <scope>SUBCELLULAR LOCATION</scope>
    <source>
        <strain>cv. Landsberg erecta</strain>
    </source>
</reference>
<protein>
    <recommendedName>
        <fullName>54 kDa cell wall protein</fullName>
    </recommendedName>
</protein>
<accession>P80828</accession>
<keyword id="KW-0134">Cell wall</keyword>
<keyword id="KW-0903">Direct protein sequencing</keyword>
<keyword id="KW-0964">Secreted</keyword>
<proteinExistence type="evidence at protein level"/>
<evidence type="ECO:0000256" key="1">
    <source>
        <dbReference type="SAM" id="MobiDB-lite"/>
    </source>
</evidence>
<evidence type="ECO:0000269" key="2">
    <source>
    </source>
</evidence>
<evidence type="ECO:0000303" key="3">
    <source>
    </source>
</evidence>
<evidence type="ECO:0000305" key="4"/>